<reference key="1">
    <citation type="journal article" date="2009" name="PLoS Genet.">
        <title>Organised genome dynamics in the Escherichia coli species results in highly diverse adaptive paths.</title>
        <authorList>
            <person name="Touchon M."/>
            <person name="Hoede C."/>
            <person name="Tenaillon O."/>
            <person name="Barbe V."/>
            <person name="Baeriswyl S."/>
            <person name="Bidet P."/>
            <person name="Bingen E."/>
            <person name="Bonacorsi S."/>
            <person name="Bouchier C."/>
            <person name="Bouvet O."/>
            <person name="Calteau A."/>
            <person name="Chiapello H."/>
            <person name="Clermont O."/>
            <person name="Cruveiller S."/>
            <person name="Danchin A."/>
            <person name="Diard M."/>
            <person name="Dossat C."/>
            <person name="Karoui M.E."/>
            <person name="Frapy E."/>
            <person name="Garry L."/>
            <person name="Ghigo J.M."/>
            <person name="Gilles A.M."/>
            <person name="Johnson J."/>
            <person name="Le Bouguenec C."/>
            <person name="Lescat M."/>
            <person name="Mangenot S."/>
            <person name="Martinez-Jehanne V."/>
            <person name="Matic I."/>
            <person name="Nassif X."/>
            <person name="Oztas S."/>
            <person name="Petit M.A."/>
            <person name="Pichon C."/>
            <person name="Rouy Z."/>
            <person name="Ruf C.S."/>
            <person name="Schneider D."/>
            <person name="Tourret J."/>
            <person name="Vacherie B."/>
            <person name="Vallenet D."/>
            <person name="Medigue C."/>
            <person name="Rocha E.P.C."/>
            <person name="Denamur E."/>
        </authorList>
    </citation>
    <scope>NUCLEOTIDE SEQUENCE [LARGE SCALE GENOMIC DNA]</scope>
    <source>
        <strain>ATCC 35469 / DSM 13698 / BCRC 15582 / CCUG 18766 / IAM 14443 / JCM 21226 / LMG 7866 / NBRC 102419 / NCTC 12128 / CDC 0568-73</strain>
    </source>
</reference>
<comment type="function">
    <text evidence="1">Plays an important role in bacterial chemotaxis signal transduction pathway by accelerating the dephosphorylation of phosphorylated CheY (CheY-P).</text>
</comment>
<comment type="subunit">
    <text evidence="1">Homodimer.</text>
</comment>
<comment type="subcellular location">
    <subcellularLocation>
        <location evidence="1">Cytoplasm</location>
    </subcellularLocation>
</comment>
<comment type="similarity">
    <text evidence="3">Belongs to the CheZ family.</text>
</comment>
<dbReference type="EC" id="3.1.3.-"/>
<dbReference type="EMBL" id="CU928158">
    <property type="protein sequence ID" value="CAQ88673.1"/>
    <property type="molecule type" value="Genomic_DNA"/>
</dbReference>
<dbReference type="RefSeq" id="WP_000983596.1">
    <property type="nucleotide sequence ID" value="NC_011740.1"/>
</dbReference>
<dbReference type="SMR" id="B7LP17"/>
<dbReference type="GeneID" id="75057806"/>
<dbReference type="KEGG" id="efe:EFER_1145"/>
<dbReference type="HOGENOM" id="CLU_080718_1_0_6"/>
<dbReference type="OrthoDB" id="9773007at2"/>
<dbReference type="Proteomes" id="UP000000745">
    <property type="component" value="Chromosome"/>
</dbReference>
<dbReference type="GO" id="GO:0009288">
    <property type="term" value="C:bacterial-type flagellum"/>
    <property type="evidence" value="ECO:0007669"/>
    <property type="project" value="InterPro"/>
</dbReference>
<dbReference type="GO" id="GO:0005737">
    <property type="term" value="C:cytoplasm"/>
    <property type="evidence" value="ECO:0007669"/>
    <property type="project" value="UniProtKB-SubCell"/>
</dbReference>
<dbReference type="GO" id="GO:0004721">
    <property type="term" value="F:phosphoprotein phosphatase activity"/>
    <property type="evidence" value="ECO:0007669"/>
    <property type="project" value="UniProtKB-KW"/>
</dbReference>
<dbReference type="GO" id="GO:0097588">
    <property type="term" value="P:archaeal or bacterial-type flagellum-dependent cell motility"/>
    <property type="evidence" value="ECO:0007669"/>
    <property type="project" value="UniProtKB-KW"/>
</dbReference>
<dbReference type="GO" id="GO:0006935">
    <property type="term" value="P:chemotaxis"/>
    <property type="evidence" value="ECO:0007669"/>
    <property type="project" value="UniProtKB-KW"/>
</dbReference>
<dbReference type="GO" id="GO:0050920">
    <property type="term" value="P:regulation of chemotaxis"/>
    <property type="evidence" value="ECO:0007669"/>
    <property type="project" value="InterPro"/>
</dbReference>
<dbReference type="Gene3D" id="1.10.287.500">
    <property type="entry name" value="Helix hairpin bin"/>
    <property type="match status" value="1"/>
</dbReference>
<dbReference type="Gene3D" id="1.20.5.590">
    <property type="entry name" value="Single helix bin"/>
    <property type="match status" value="1"/>
</dbReference>
<dbReference type="InterPro" id="IPR007439">
    <property type="entry name" value="Chemotax_Pase_CheZ"/>
</dbReference>
<dbReference type="InterPro" id="IPR050992">
    <property type="entry name" value="CheZ_family_phosphatases"/>
</dbReference>
<dbReference type="NCBIfam" id="NF008368">
    <property type="entry name" value="PRK11166.1"/>
    <property type="match status" value="1"/>
</dbReference>
<dbReference type="PANTHER" id="PTHR43693">
    <property type="entry name" value="PROTEIN PHOSPHATASE CHEZ"/>
    <property type="match status" value="1"/>
</dbReference>
<dbReference type="PANTHER" id="PTHR43693:SF1">
    <property type="entry name" value="PROTEIN PHOSPHATASE CHEZ"/>
    <property type="match status" value="1"/>
</dbReference>
<dbReference type="Pfam" id="PF04344">
    <property type="entry name" value="CheZ"/>
    <property type="match status" value="1"/>
</dbReference>
<dbReference type="PIRSF" id="PIRSF002884">
    <property type="entry name" value="CheZ"/>
    <property type="match status" value="1"/>
</dbReference>
<dbReference type="SUPFAM" id="SSF75708">
    <property type="entry name" value="Chemotaxis phosphatase CheZ"/>
    <property type="match status" value="1"/>
</dbReference>
<sequence length="214" mass="24096">MMQPSIKPADEHSAADIIARIGSLTRMLRDSLRELGLDRAIAEAAEAIPDARDRLDYVVQMTAQAAERALNSVEASQPHQEEMEKGAKSLSQRWDAWFDDPIELAQARELVTDTRRFLAEVPDHTRFTNAQLLDIMMAQDFQDLTGQVIKRMMDVIQEIERQLLMVLLENIPEQDARPKRENESLLNGPQVDTSKAGVVASQDQVDDLLDSLGF</sequence>
<feature type="chain" id="PRO_0000410779" description="Protein phosphatase CheZ">
    <location>
        <begin position="1"/>
        <end position="214"/>
    </location>
</feature>
<feature type="region of interest" description="Disordered" evidence="2">
    <location>
        <begin position="176"/>
        <end position="199"/>
    </location>
</feature>
<feature type="compositionally biased region" description="Polar residues" evidence="2">
    <location>
        <begin position="184"/>
        <end position="193"/>
    </location>
</feature>
<feature type="site" description="Enhances dephosphorylation of CheY-P" evidence="1">
    <location>
        <position position="147"/>
    </location>
</feature>
<name>CHEZ_ESCF3</name>
<organism>
    <name type="scientific">Escherichia fergusonii (strain ATCC 35469 / DSM 13698 / CCUG 18766 / IAM 14443 / JCM 21226 / LMG 7866 / NBRC 102419 / NCTC 12128 / CDC 0568-73)</name>
    <dbReference type="NCBI Taxonomy" id="585054"/>
    <lineage>
        <taxon>Bacteria</taxon>
        <taxon>Pseudomonadati</taxon>
        <taxon>Pseudomonadota</taxon>
        <taxon>Gammaproteobacteria</taxon>
        <taxon>Enterobacterales</taxon>
        <taxon>Enterobacteriaceae</taxon>
        <taxon>Escherichia</taxon>
    </lineage>
</organism>
<keyword id="KW-0145">Chemotaxis</keyword>
<keyword id="KW-0963">Cytoplasm</keyword>
<keyword id="KW-0283">Flagellar rotation</keyword>
<keyword id="KW-0378">Hydrolase</keyword>
<keyword id="KW-0904">Protein phosphatase</keyword>
<proteinExistence type="inferred from homology"/>
<accession>B7LP17</accession>
<gene>
    <name type="primary">cheZ</name>
    <name type="ordered locus">EFER_1145</name>
</gene>
<protein>
    <recommendedName>
        <fullName>Protein phosphatase CheZ</fullName>
        <ecNumber>3.1.3.-</ecNumber>
    </recommendedName>
    <alternativeName>
        <fullName>Chemotaxis protein CheZ</fullName>
    </alternativeName>
</protein>
<evidence type="ECO:0000250" key="1"/>
<evidence type="ECO:0000256" key="2">
    <source>
        <dbReference type="SAM" id="MobiDB-lite"/>
    </source>
</evidence>
<evidence type="ECO:0000305" key="3"/>